<sequence>MTISPPEREPKVRVVVDNDPVPTSFEKWAKPGHFDRTLARGPQTTTWIWNLHALAHDFDTHTSDLEDISRKIFSAHFGHLAVVFIWLSGMYFHGAKFSNYEAWLADPTGIKPSAQVVWPIVGQGILNGDVGGGFHGIQITSGLFQLWRASGITNEFQLYCTAIGGLVMAGLMLFAGWFHYHKRAPKLEWFQNVESMLNHHLAGLLGLGSLAWAGHQIHVSLPINKLLDAGVAAKDIPLPHEFILNPSLMAELYPKVDWGFFSGVIPFFTFNWAAYSDFLTFNGGLNPVTGGLWLSDTAHHHLAIAVLFIIAGHMYRTNWGIGHSLKEILEAHKGPFTGAGHKGLYEVLTTSWHAQLAINLAMMGSLSIIVAQHMYAMPPYPYLATDYPTQLSLFTHHMWIGGFLVVGGAAHGAIFMVRDYDPAMNQNNVLDRVLRHRDAIISHLNWVCIFLGFHSFGLYVHNDTMRAFGRPQDMFSDTGIQLQPVFAQWVQNLHTLAPGGTAPNAAATASVAFGGDVVAVGGKVAMMPIVLGTADFMVHHIHAFTIHVTVLILLKGVLFARSSRLIPDKANLGFRFPCDGPGRGGTCQVSGWDHVFLGLFWMYNCISVVIFHFSWKMQSDVWGTVAPDGTVSHITGGNFAQSAITINGWLRDFLWAQASQVIGSYGSALSAYGLLFLGAHFIWAFSLMFLFSGRGYWQELIESIVWAHNKLKVAPAIQPRALSIIQGRAVGVAHYLLGGIATTWAFFLARIISVG</sequence>
<name>PSAA_SYNEL</name>
<keyword id="KW-0004">4Fe-4S</keyword>
<keyword id="KW-0148">Chlorophyll</keyword>
<keyword id="KW-0157">Chromophore</keyword>
<keyword id="KW-0249">Electron transport</keyword>
<keyword id="KW-0408">Iron</keyword>
<keyword id="KW-0411">Iron-sulfur</keyword>
<keyword id="KW-0460">Magnesium</keyword>
<keyword id="KW-0472">Membrane</keyword>
<keyword id="KW-0479">Metal-binding</keyword>
<keyword id="KW-0560">Oxidoreductase</keyword>
<keyword id="KW-0602">Photosynthesis</keyword>
<keyword id="KW-0603">Photosystem I</keyword>
<keyword id="KW-0793">Thylakoid</keyword>
<keyword id="KW-0812">Transmembrane</keyword>
<keyword id="KW-1133">Transmembrane helix</keyword>
<keyword id="KW-0813">Transport</keyword>
<reference key="1">
    <citation type="journal article" date="1993" name="Gene">
        <title>Genes encoding eleven subunits of photosystem I from the thermophilic cyanobacterium Synechococcus sp.</title>
        <authorList>
            <person name="Muehlenhoff U."/>
            <person name="Haehnel W."/>
            <person name="Witt H.T."/>
            <person name="Herrmann R.G."/>
        </authorList>
    </citation>
    <scope>NUCLEOTIDE SEQUENCE [GENOMIC DNA]</scope>
</reference>
<reference key="2">
    <citation type="journal article" date="2001" name="Biochim. Biophys. Acta">
        <title>Structure of photosystem I.</title>
        <authorList>
            <person name="Fromme P."/>
            <person name="Jordan P."/>
            <person name="Krauss N."/>
        </authorList>
    </citation>
    <scope>REVIEW</scope>
</reference>
<organism>
    <name type="scientific">Synechococcus elongatus</name>
    <dbReference type="NCBI Taxonomy" id="32046"/>
    <lineage>
        <taxon>Bacteria</taxon>
        <taxon>Bacillati</taxon>
        <taxon>Cyanobacteriota</taxon>
        <taxon>Cyanophyceae</taxon>
        <taxon>Synechococcales</taxon>
        <taxon>Synechococcaceae</taxon>
        <taxon>Synechococcus</taxon>
    </lineage>
</organism>
<gene>
    <name evidence="1" type="primary">psaA</name>
</gene>
<proteinExistence type="inferred from homology"/>
<comment type="function">
    <text>PsaA and PsaB bind P700, the primary electron donor of photosystem I (PSI), as well as the electron acceptors A0, A1 and FX. PSI is a plastocyanin/cytochrome c6-ferredoxin oxidoreductase, converting photonic excitation into a charge separation, which transfers an electron from the donor P700 chlorophyll pair to the spectroscopically characterized acceptors A0, A1, FX, FA and FB in turn. Oxidized P700 is reduced on the lumenal side of the thylakoid membrane by plastocyanin or cytochrome c6.</text>
</comment>
<comment type="catalytic activity">
    <reaction evidence="1">
        <text>reduced [plastocyanin] + hnu + oxidized [2Fe-2S]-[ferredoxin] = oxidized [plastocyanin] + reduced [2Fe-2S]-[ferredoxin]</text>
        <dbReference type="Rhea" id="RHEA:30407"/>
        <dbReference type="Rhea" id="RHEA-COMP:10000"/>
        <dbReference type="Rhea" id="RHEA-COMP:10001"/>
        <dbReference type="Rhea" id="RHEA-COMP:10039"/>
        <dbReference type="Rhea" id="RHEA-COMP:10040"/>
        <dbReference type="ChEBI" id="CHEBI:29036"/>
        <dbReference type="ChEBI" id="CHEBI:30212"/>
        <dbReference type="ChEBI" id="CHEBI:33737"/>
        <dbReference type="ChEBI" id="CHEBI:33738"/>
        <dbReference type="ChEBI" id="CHEBI:49552"/>
        <dbReference type="EC" id="1.97.1.12"/>
    </reaction>
</comment>
<comment type="cofactor">
    <text>PSI electron transfer chain: 5 chlorophyll a, 1 chlorophyll a', 2 phylloquinones and 3 4Fe-4S clusters. PSI core antenna: 90 chlorophyll a, 22 carotenoids, 3 phospholipids and 1 galactolipid. P700 is a chlorophyll a/chlorophyll a' dimer, A0 is one or more chlorophyll a, A1 is one or both phylloquinones and FX is a shared 4Fe-4S iron-sulfur center.</text>
</comment>
<comment type="subunit">
    <text>The PsaA/B heterodimer binds the P700 chlorophyll special pair and subsequent electron acceptors. PSI consists of a core antenna complex that captures photons, and an electron transfer chain that converts photonic excitation into a charge separation. The cyanobacterial PSI reaction center is composed of one copy each of PsaA,B,C,D,E,F,I,J,K,L,M and X, and forms trimeric complexes.</text>
</comment>
<comment type="subcellular location">
    <subcellularLocation>
        <location>Cellular thylakoid membrane</location>
        <topology>Multi-pass membrane protein</topology>
    </subcellularLocation>
</comment>
<comment type="similarity">
    <text evidence="1">Belongs to the PsaA/PsaB family.</text>
</comment>
<feature type="chain" id="PRO_0000088592" description="Photosystem I P700 chlorophyll a apoprotein A1">
    <location>
        <begin position="1"/>
        <end position="755"/>
    </location>
</feature>
<feature type="topological domain" description="Cytoplasmic" evidence="2">
    <location>
        <begin position="1"/>
        <end position="64"/>
    </location>
</feature>
<feature type="transmembrane region" description="Helical; Name=I" evidence="1">
    <location>
        <begin position="65"/>
        <end position="96"/>
    </location>
</feature>
<feature type="topological domain" description="Lumenal, thylakoid" evidence="2">
    <location>
        <begin position="97"/>
        <end position="155"/>
    </location>
</feature>
<feature type="transmembrane region" description="Helical; Name=II" evidence="1">
    <location>
        <begin position="156"/>
        <end position="179"/>
    </location>
</feature>
<feature type="topological domain" description="Cytoplasmic" evidence="2">
    <location>
        <begin position="180"/>
        <end position="192"/>
    </location>
</feature>
<feature type="transmembrane region" description="Helical; Name=III" evidence="1">
    <location>
        <begin position="193"/>
        <end position="217"/>
    </location>
</feature>
<feature type="topological domain" description="Lumenal, thylakoid" evidence="2">
    <location>
        <begin position="218"/>
        <end position="293"/>
    </location>
</feature>
<feature type="transmembrane region" description="Helical; Name=IV" evidence="1">
    <location>
        <begin position="294"/>
        <end position="311"/>
    </location>
</feature>
<feature type="topological domain" description="Cytoplasmic" evidence="2">
    <location>
        <begin position="312"/>
        <end position="352"/>
    </location>
</feature>
<feature type="transmembrane region" description="Helical; Name=V" evidence="1">
    <location>
        <begin position="353"/>
        <end position="376"/>
    </location>
</feature>
<feature type="topological domain" description="Lumenal, thylakoid" evidence="2">
    <location>
        <begin position="377"/>
        <end position="386"/>
    </location>
</feature>
<feature type="transmembrane region" description="Helical; Name=VI" evidence="1">
    <location>
        <begin position="387"/>
        <end position="418"/>
    </location>
</feature>
<feature type="topological domain" description="Cytoplasmic" evidence="2">
    <location>
        <begin position="419"/>
        <end position="436"/>
    </location>
</feature>
<feature type="transmembrane region" description="Helical; Name=VII" evidence="1">
    <location>
        <begin position="437"/>
        <end position="468"/>
    </location>
</feature>
<feature type="topological domain" description="Lumenal, thylakoid" evidence="2">
    <location>
        <begin position="469"/>
        <end position="532"/>
    </location>
</feature>
<feature type="transmembrane region" description="Helical; Name=VIII" evidence="1">
    <location>
        <begin position="533"/>
        <end position="558"/>
    </location>
</feature>
<feature type="topological domain" description="Cytoplasmic" evidence="2">
    <location>
        <begin position="559"/>
        <end position="590"/>
    </location>
</feature>
<feature type="transmembrane region" description="Helical; Name=IX" evidence="1">
    <location>
        <begin position="591"/>
        <end position="619"/>
    </location>
</feature>
<feature type="topological domain" description="Lumenal, thylakoid" evidence="2">
    <location>
        <begin position="620"/>
        <end position="668"/>
    </location>
</feature>
<feature type="transmembrane region" description="Helical; Name=X" evidence="1">
    <location>
        <begin position="669"/>
        <end position="690"/>
    </location>
</feature>
<feature type="topological domain" description="Cytoplasmic" evidence="2">
    <location>
        <begin position="691"/>
        <end position="723"/>
    </location>
</feature>
<feature type="transmembrane region" description="Helical; Name=XI" evidence="1">
    <location>
        <begin position="724"/>
        <end position="753"/>
    </location>
</feature>
<feature type="binding site" evidence="1">
    <location>
        <position position="578"/>
    </location>
    <ligand>
        <name>[4Fe-4S] cluster</name>
        <dbReference type="ChEBI" id="CHEBI:49883"/>
        <note>ligand shared between dimeric partners</note>
    </ligand>
</feature>
<feature type="binding site" evidence="1">
    <location>
        <position position="587"/>
    </location>
    <ligand>
        <name>[4Fe-4S] cluster</name>
        <dbReference type="ChEBI" id="CHEBI:49883"/>
        <note>ligand shared between dimeric partners</note>
    </ligand>
</feature>
<feature type="binding site" description="axial binding residue" evidence="1">
    <location>
        <position position="680"/>
    </location>
    <ligand>
        <name>chlorophyll a'</name>
        <dbReference type="ChEBI" id="CHEBI:189419"/>
        <label>A1</label>
    </ligand>
    <ligandPart>
        <name>Mg</name>
        <dbReference type="ChEBI" id="CHEBI:25107"/>
    </ligandPart>
</feature>
<feature type="binding site" description="axial binding residue" evidence="1">
    <location>
        <position position="688"/>
    </location>
    <ligand>
        <name>chlorophyll a</name>
        <dbReference type="ChEBI" id="CHEBI:58416"/>
        <label>A3</label>
    </ligand>
    <ligandPart>
        <name>Mg</name>
        <dbReference type="ChEBI" id="CHEBI:25107"/>
    </ligandPart>
</feature>
<feature type="binding site" evidence="1">
    <location>
        <position position="696"/>
    </location>
    <ligand>
        <name>chlorophyll a</name>
        <dbReference type="ChEBI" id="CHEBI:58416"/>
        <label>A3</label>
    </ligand>
</feature>
<feature type="binding site" evidence="1">
    <location>
        <position position="697"/>
    </location>
    <ligand>
        <name>phylloquinone</name>
        <dbReference type="ChEBI" id="CHEBI:18067"/>
        <label>A</label>
    </ligand>
</feature>
<accession>P0A406</accession>
<accession>P25896</accession>
<dbReference type="EC" id="1.97.1.12" evidence="1"/>
<dbReference type="EMBL" id="X63768">
    <property type="protein sequence ID" value="CAA45304.1"/>
    <property type="molecule type" value="Genomic_DNA"/>
</dbReference>
<dbReference type="SMR" id="P0A406"/>
<dbReference type="GO" id="GO:0009522">
    <property type="term" value="C:photosystem I"/>
    <property type="evidence" value="ECO:0007669"/>
    <property type="project" value="UniProtKB-KW"/>
</dbReference>
<dbReference type="GO" id="GO:0031676">
    <property type="term" value="C:plasma membrane-derived thylakoid membrane"/>
    <property type="evidence" value="ECO:0007669"/>
    <property type="project" value="UniProtKB-SubCell"/>
</dbReference>
<dbReference type="GO" id="GO:0051539">
    <property type="term" value="F:4 iron, 4 sulfur cluster binding"/>
    <property type="evidence" value="ECO:0007669"/>
    <property type="project" value="UniProtKB-KW"/>
</dbReference>
<dbReference type="GO" id="GO:0016168">
    <property type="term" value="F:chlorophyll binding"/>
    <property type="evidence" value="ECO:0007669"/>
    <property type="project" value="UniProtKB-KW"/>
</dbReference>
<dbReference type="GO" id="GO:0009055">
    <property type="term" value="F:electron transfer activity"/>
    <property type="evidence" value="ECO:0007669"/>
    <property type="project" value="UniProtKB-UniRule"/>
</dbReference>
<dbReference type="GO" id="GO:0000287">
    <property type="term" value="F:magnesium ion binding"/>
    <property type="evidence" value="ECO:0007669"/>
    <property type="project" value="UniProtKB-UniRule"/>
</dbReference>
<dbReference type="GO" id="GO:0016491">
    <property type="term" value="F:oxidoreductase activity"/>
    <property type="evidence" value="ECO:0007669"/>
    <property type="project" value="UniProtKB-KW"/>
</dbReference>
<dbReference type="GO" id="GO:0015979">
    <property type="term" value="P:photosynthesis"/>
    <property type="evidence" value="ECO:0007669"/>
    <property type="project" value="UniProtKB-UniRule"/>
</dbReference>
<dbReference type="FunFam" id="1.20.1130.10:FF:000001">
    <property type="entry name" value="Photosystem I P700 chlorophyll a apoprotein A2"/>
    <property type="match status" value="1"/>
</dbReference>
<dbReference type="Gene3D" id="1.20.1130.10">
    <property type="entry name" value="Photosystem I PsaA/PsaB"/>
    <property type="match status" value="1"/>
</dbReference>
<dbReference type="HAMAP" id="MF_00458">
    <property type="entry name" value="PSI_PsaA"/>
    <property type="match status" value="1"/>
</dbReference>
<dbReference type="InterPro" id="IPR006243">
    <property type="entry name" value="PSI_PsaA"/>
</dbReference>
<dbReference type="InterPro" id="IPR001280">
    <property type="entry name" value="PSI_PsaA/B"/>
</dbReference>
<dbReference type="InterPro" id="IPR020586">
    <property type="entry name" value="PSI_PsaA/B_CS"/>
</dbReference>
<dbReference type="InterPro" id="IPR036408">
    <property type="entry name" value="PSI_PsaA/B_sf"/>
</dbReference>
<dbReference type="NCBIfam" id="TIGR01335">
    <property type="entry name" value="psaA"/>
    <property type="match status" value="1"/>
</dbReference>
<dbReference type="PANTHER" id="PTHR30128">
    <property type="entry name" value="OUTER MEMBRANE PROTEIN, OMPA-RELATED"/>
    <property type="match status" value="1"/>
</dbReference>
<dbReference type="PANTHER" id="PTHR30128:SF19">
    <property type="entry name" value="PHOTOSYSTEM I P700 CHLOROPHYLL A APOPROTEIN A1-RELATED"/>
    <property type="match status" value="1"/>
</dbReference>
<dbReference type="Pfam" id="PF00223">
    <property type="entry name" value="PsaA_PsaB"/>
    <property type="match status" value="1"/>
</dbReference>
<dbReference type="PIRSF" id="PIRSF002905">
    <property type="entry name" value="PSI_A"/>
    <property type="match status" value="1"/>
</dbReference>
<dbReference type="PRINTS" id="PR00257">
    <property type="entry name" value="PHOTSYSPSAAB"/>
</dbReference>
<dbReference type="SUPFAM" id="SSF81558">
    <property type="entry name" value="Photosystem I subunits PsaA/PsaB"/>
    <property type="match status" value="1"/>
</dbReference>
<dbReference type="PROSITE" id="PS00419">
    <property type="entry name" value="PHOTOSYSTEM_I_PSAAB"/>
    <property type="match status" value="1"/>
</dbReference>
<protein>
    <recommendedName>
        <fullName evidence="1">Photosystem I P700 chlorophyll a apoprotein A1</fullName>
        <ecNumber evidence="1">1.97.1.12</ecNumber>
    </recommendedName>
    <alternativeName>
        <fullName evidence="1">PsaA</fullName>
    </alternativeName>
</protein>
<evidence type="ECO:0000255" key="1">
    <source>
        <dbReference type="HAMAP-Rule" id="MF_00458"/>
    </source>
</evidence>
<evidence type="ECO:0000305" key="2"/>